<evidence type="ECO:0000255" key="1">
    <source>
        <dbReference type="HAMAP-Rule" id="MF_00501"/>
    </source>
</evidence>
<evidence type="ECO:0000305" key="2"/>
<gene>
    <name evidence="1" type="primary">rpmE</name>
    <name type="ordered locus">ECUMN_4466</name>
</gene>
<accession>B7NFN5</accession>
<dbReference type="EMBL" id="CU928163">
    <property type="protein sequence ID" value="CAR15592.1"/>
    <property type="molecule type" value="Genomic_DNA"/>
</dbReference>
<dbReference type="RefSeq" id="WP_000710769.1">
    <property type="nucleotide sequence ID" value="NC_011751.1"/>
</dbReference>
<dbReference type="RefSeq" id="YP_002415081.1">
    <property type="nucleotide sequence ID" value="NC_011751.1"/>
</dbReference>
<dbReference type="SMR" id="B7NFN5"/>
<dbReference type="STRING" id="585056.ECUMN_4466"/>
<dbReference type="GeneID" id="93777962"/>
<dbReference type="KEGG" id="eum:ECUMN_4466"/>
<dbReference type="PATRIC" id="fig|585056.7.peg.4636"/>
<dbReference type="HOGENOM" id="CLU_114306_4_3_6"/>
<dbReference type="Proteomes" id="UP000007097">
    <property type="component" value="Chromosome"/>
</dbReference>
<dbReference type="GO" id="GO:1990904">
    <property type="term" value="C:ribonucleoprotein complex"/>
    <property type="evidence" value="ECO:0007669"/>
    <property type="project" value="UniProtKB-KW"/>
</dbReference>
<dbReference type="GO" id="GO:0005840">
    <property type="term" value="C:ribosome"/>
    <property type="evidence" value="ECO:0007669"/>
    <property type="project" value="UniProtKB-KW"/>
</dbReference>
<dbReference type="GO" id="GO:0046872">
    <property type="term" value="F:metal ion binding"/>
    <property type="evidence" value="ECO:0007669"/>
    <property type="project" value="UniProtKB-KW"/>
</dbReference>
<dbReference type="GO" id="GO:0019843">
    <property type="term" value="F:rRNA binding"/>
    <property type="evidence" value="ECO:0007669"/>
    <property type="project" value="UniProtKB-KW"/>
</dbReference>
<dbReference type="GO" id="GO:0003735">
    <property type="term" value="F:structural constituent of ribosome"/>
    <property type="evidence" value="ECO:0007669"/>
    <property type="project" value="InterPro"/>
</dbReference>
<dbReference type="GO" id="GO:0006412">
    <property type="term" value="P:translation"/>
    <property type="evidence" value="ECO:0007669"/>
    <property type="project" value="UniProtKB-UniRule"/>
</dbReference>
<dbReference type="FunFam" id="4.10.830.30:FF:000001">
    <property type="entry name" value="50S ribosomal protein L31"/>
    <property type="match status" value="1"/>
</dbReference>
<dbReference type="Gene3D" id="4.10.830.30">
    <property type="entry name" value="Ribosomal protein L31"/>
    <property type="match status" value="1"/>
</dbReference>
<dbReference type="HAMAP" id="MF_00501">
    <property type="entry name" value="Ribosomal_bL31_1"/>
    <property type="match status" value="1"/>
</dbReference>
<dbReference type="InterPro" id="IPR034704">
    <property type="entry name" value="Ribosomal_bL28/bL31-like_sf"/>
</dbReference>
<dbReference type="InterPro" id="IPR002150">
    <property type="entry name" value="Ribosomal_bL31"/>
</dbReference>
<dbReference type="InterPro" id="IPR027491">
    <property type="entry name" value="Ribosomal_bL31_A"/>
</dbReference>
<dbReference type="InterPro" id="IPR042105">
    <property type="entry name" value="Ribosomal_bL31_sf"/>
</dbReference>
<dbReference type="NCBIfam" id="TIGR00105">
    <property type="entry name" value="L31"/>
    <property type="match status" value="1"/>
</dbReference>
<dbReference type="NCBIfam" id="NF000612">
    <property type="entry name" value="PRK00019.1"/>
    <property type="match status" value="1"/>
</dbReference>
<dbReference type="NCBIfam" id="NF001809">
    <property type="entry name" value="PRK00528.1"/>
    <property type="match status" value="1"/>
</dbReference>
<dbReference type="PANTHER" id="PTHR33280">
    <property type="entry name" value="50S RIBOSOMAL PROTEIN L31, CHLOROPLASTIC"/>
    <property type="match status" value="1"/>
</dbReference>
<dbReference type="PANTHER" id="PTHR33280:SF6">
    <property type="entry name" value="LARGE RIBOSOMAL SUBUNIT PROTEIN BL31A"/>
    <property type="match status" value="1"/>
</dbReference>
<dbReference type="Pfam" id="PF01197">
    <property type="entry name" value="Ribosomal_L31"/>
    <property type="match status" value="1"/>
</dbReference>
<dbReference type="PRINTS" id="PR01249">
    <property type="entry name" value="RIBOSOMALL31"/>
</dbReference>
<dbReference type="SUPFAM" id="SSF143800">
    <property type="entry name" value="L28p-like"/>
    <property type="match status" value="1"/>
</dbReference>
<dbReference type="PROSITE" id="PS01143">
    <property type="entry name" value="RIBOSOMAL_L31"/>
    <property type="match status" value="1"/>
</dbReference>
<comment type="function">
    <text evidence="1">Binds the 23S rRNA.</text>
</comment>
<comment type="cofactor">
    <cofactor evidence="1">
        <name>Zn(2+)</name>
        <dbReference type="ChEBI" id="CHEBI:29105"/>
    </cofactor>
    <text evidence="1">Binds 1 zinc ion per subunit.</text>
</comment>
<comment type="subunit">
    <text evidence="1">Part of the 50S ribosomal subunit.</text>
</comment>
<comment type="similarity">
    <text evidence="1">Belongs to the bacterial ribosomal protein bL31 family. Type A subfamily.</text>
</comment>
<keyword id="KW-0007">Acetylation</keyword>
<keyword id="KW-0479">Metal-binding</keyword>
<keyword id="KW-0687">Ribonucleoprotein</keyword>
<keyword id="KW-0689">Ribosomal protein</keyword>
<keyword id="KW-0694">RNA-binding</keyword>
<keyword id="KW-0699">rRNA-binding</keyword>
<keyword id="KW-0862">Zinc</keyword>
<organism>
    <name type="scientific">Escherichia coli O17:K52:H18 (strain UMN026 / ExPEC)</name>
    <dbReference type="NCBI Taxonomy" id="585056"/>
    <lineage>
        <taxon>Bacteria</taxon>
        <taxon>Pseudomonadati</taxon>
        <taxon>Pseudomonadota</taxon>
        <taxon>Gammaproteobacteria</taxon>
        <taxon>Enterobacterales</taxon>
        <taxon>Enterobacteriaceae</taxon>
        <taxon>Escherichia</taxon>
    </lineage>
</organism>
<sequence>MKKDIHPKYEEITASCSCGNVMKIRSTVGHDLNLDVCSKCHPFFTGKQRDVATGGRVDRFNKRFNIPGSK</sequence>
<proteinExistence type="inferred from homology"/>
<name>RL31_ECOLU</name>
<protein>
    <recommendedName>
        <fullName evidence="1">Large ribosomal subunit protein bL31</fullName>
    </recommendedName>
    <alternativeName>
        <fullName evidence="2">50S ribosomal protein L31</fullName>
    </alternativeName>
</protein>
<reference key="1">
    <citation type="journal article" date="2009" name="PLoS Genet.">
        <title>Organised genome dynamics in the Escherichia coli species results in highly diverse adaptive paths.</title>
        <authorList>
            <person name="Touchon M."/>
            <person name="Hoede C."/>
            <person name="Tenaillon O."/>
            <person name="Barbe V."/>
            <person name="Baeriswyl S."/>
            <person name="Bidet P."/>
            <person name="Bingen E."/>
            <person name="Bonacorsi S."/>
            <person name="Bouchier C."/>
            <person name="Bouvet O."/>
            <person name="Calteau A."/>
            <person name="Chiapello H."/>
            <person name="Clermont O."/>
            <person name="Cruveiller S."/>
            <person name="Danchin A."/>
            <person name="Diard M."/>
            <person name="Dossat C."/>
            <person name="Karoui M.E."/>
            <person name="Frapy E."/>
            <person name="Garry L."/>
            <person name="Ghigo J.M."/>
            <person name="Gilles A.M."/>
            <person name="Johnson J."/>
            <person name="Le Bouguenec C."/>
            <person name="Lescat M."/>
            <person name="Mangenot S."/>
            <person name="Martinez-Jehanne V."/>
            <person name="Matic I."/>
            <person name="Nassif X."/>
            <person name="Oztas S."/>
            <person name="Petit M.A."/>
            <person name="Pichon C."/>
            <person name="Rouy Z."/>
            <person name="Ruf C.S."/>
            <person name="Schneider D."/>
            <person name="Tourret J."/>
            <person name="Vacherie B."/>
            <person name="Vallenet D."/>
            <person name="Medigue C."/>
            <person name="Rocha E.P.C."/>
            <person name="Denamur E."/>
        </authorList>
    </citation>
    <scope>NUCLEOTIDE SEQUENCE [LARGE SCALE GENOMIC DNA]</scope>
    <source>
        <strain>UMN026 / ExPEC</strain>
    </source>
</reference>
<feature type="chain" id="PRO_1000126620" description="Large ribosomal subunit protein bL31">
    <location>
        <begin position="1"/>
        <end position="70"/>
    </location>
</feature>
<feature type="binding site" evidence="1">
    <location>
        <position position="16"/>
    </location>
    <ligand>
        <name>Zn(2+)</name>
        <dbReference type="ChEBI" id="CHEBI:29105"/>
    </ligand>
</feature>
<feature type="binding site" evidence="1">
    <location>
        <position position="18"/>
    </location>
    <ligand>
        <name>Zn(2+)</name>
        <dbReference type="ChEBI" id="CHEBI:29105"/>
    </ligand>
</feature>
<feature type="binding site" evidence="1">
    <location>
        <position position="37"/>
    </location>
    <ligand>
        <name>Zn(2+)</name>
        <dbReference type="ChEBI" id="CHEBI:29105"/>
    </ligand>
</feature>
<feature type="binding site" evidence="1">
    <location>
        <position position="40"/>
    </location>
    <ligand>
        <name>Zn(2+)</name>
        <dbReference type="ChEBI" id="CHEBI:29105"/>
    </ligand>
</feature>
<feature type="modified residue" description="N6-acetyllysine" evidence="1">
    <location>
        <position position="8"/>
    </location>
</feature>